<accession>B4SEQ2</accession>
<comment type="similarity">
    <text evidence="1">Belongs to the BshC family.</text>
</comment>
<evidence type="ECO:0000255" key="1">
    <source>
        <dbReference type="HAMAP-Rule" id="MF_01867"/>
    </source>
</evidence>
<gene>
    <name evidence="1" type="primary">bshC</name>
    <name type="ordered locus">Ppha_2387</name>
</gene>
<proteinExistence type="inferred from homology"/>
<organism>
    <name type="scientific">Pelodictyon phaeoclathratiforme (strain DSM 5477 / BU-1)</name>
    <dbReference type="NCBI Taxonomy" id="324925"/>
    <lineage>
        <taxon>Bacteria</taxon>
        <taxon>Pseudomonadati</taxon>
        <taxon>Chlorobiota</taxon>
        <taxon>Chlorobiia</taxon>
        <taxon>Chlorobiales</taxon>
        <taxon>Chlorobiaceae</taxon>
        <taxon>Chlorobium/Pelodictyon group</taxon>
        <taxon>Pelodictyon</taxon>
    </lineage>
</organism>
<sequence>MNTYLLEYKHILTPKKGFSKLFRDYTSESSERSELIAACFHLDYQKEADYYRQLGLLGSRTFERESLVRLLSRQNTRYGATALHLREIEKLRSPRCMAIVTGQQLGLFTGPIYTIYKALTAIIFAKRQKALFPEYDFVPIFWLEGEDHDYDESAQTAIFSENQVVHFKEEPYRRLPNQMVANSCFGEEISRTVEEYLRLLPETTYKKEVSEMLREFYYPGNTFEMSFACTMMRLFREQPLILLSSQDPDFKQLSSRIFLRELSSSPASSYNVVAQSSCLENLGYTAQTKPRTVNLFHVNHLGQRQKIEHPSEDSFSILPDKQRYSKHQFLELCQDHPEQFSPNVVLRPIIQDFVLPTFACIAGPGEISYLAQYRKNYEHFGISMPFIIPRGSFTLVEPKISRIMDKLLQVIGKPGVSRKQIYHAVFGDLQQLKKNAVGVTENPQLETLFEETKTEIRRALAALGPLLSKIDPTLEPLLAASTVQSAKIIENIEQKTWKASRRKHEELLEQILKAETALFPDGLPQERLINIFYFLNKYGTELIDTLKNLLNGHATEAHIIVEL</sequence>
<feature type="chain" id="PRO_0000378247" description="Putative cysteine ligase BshC">
    <location>
        <begin position="1"/>
        <end position="563"/>
    </location>
</feature>
<feature type="coiled-coil region" evidence="1">
    <location>
        <begin position="498"/>
        <end position="518"/>
    </location>
</feature>
<keyword id="KW-0175">Coiled coil</keyword>
<keyword id="KW-0436">Ligase</keyword>
<keyword id="KW-1185">Reference proteome</keyword>
<dbReference type="EC" id="6.-.-.-" evidence="1"/>
<dbReference type="EMBL" id="CP001110">
    <property type="protein sequence ID" value="ACF44578.1"/>
    <property type="molecule type" value="Genomic_DNA"/>
</dbReference>
<dbReference type="RefSeq" id="WP_012509052.1">
    <property type="nucleotide sequence ID" value="NC_011060.1"/>
</dbReference>
<dbReference type="SMR" id="B4SEQ2"/>
<dbReference type="STRING" id="324925.Ppha_2387"/>
<dbReference type="KEGG" id="pph:Ppha_2387"/>
<dbReference type="eggNOG" id="COG4365">
    <property type="taxonomic scope" value="Bacteria"/>
</dbReference>
<dbReference type="HOGENOM" id="CLU_022249_1_0_10"/>
<dbReference type="OrthoDB" id="9765151at2"/>
<dbReference type="Proteomes" id="UP000002724">
    <property type="component" value="Chromosome"/>
</dbReference>
<dbReference type="GO" id="GO:0016874">
    <property type="term" value="F:ligase activity"/>
    <property type="evidence" value="ECO:0007669"/>
    <property type="project" value="UniProtKB-UniRule"/>
</dbReference>
<dbReference type="HAMAP" id="MF_01867">
    <property type="entry name" value="BshC"/>
    <property type="match status" value="1"/>
</dbReference>
<dbReference type="InterPro" id="IPR011199">
    <property type="entry name" value="Bacillithiol_biosynth_BshC"/>
</dbReference>
<dbReference type="InterPro" id="IPR055399">
    <property type="entry name" value="CC_BshC"/>
</dbReference>
<dbReference type="InterPro" id="IPR055398">
    <property type="entry name" value="Rossmann-like_BshC"/>
</dbReference>
<dbReference type="NCBIfam" id="TIGR03998">
    <property type="entry name" value="thiol_BshC"/>
    <property type="match status" value="1"/>
</dbReference>
<dbReference type="Pfam" id="PF24850">
    <property type="entry name" value="CC_BshC"/>
    <property type="match status" value="1"/>
</dbReference>
<dbReference type="Pfam" id="PF10079">
    <property type="entry name" value="Rossmann-like_BshC"/>
    <property type="match status" value="1"/>
</dbReference>
<dbReference type="PIRSF" id="PIRSF012535">
    <property type="entry name" value="UCP012535"/>
    <property type="match status" value="1"/>
</dbReference>
<protein>
    <recommendedName>
        <fullName evidence="1">Putative cysteine ligase BshC</fullName>
        <ecNumber evidence="1">6.-.-.-</ecNumber>
    </recommendedName>
</protein>
<reference key="1">
    <citation type="submission" date="2008-06" db="EMBL/GenBank/DDBJ databases">
        <title>Complete sequence of Pelodictyon phaeoclathratiforme BU-1.</title>
        <authorList>
            <consortium name="US DOE Joint Genome Institute"/>
            <person name="Lucas S."/>
            <person name="Copeland A."/>
            <person name="Lapidus A."/>
            <person name="Glavina del Rio T."/>
            <person name="Dalin E."/>
            <person name="Tice H."/>
            <person name="Bruce D."/>
            <person name="Goodwin L."/>
            <person name="Pitluck S."/>
            <person name="Schmutz J."/>
            <person name="Larimer F."/>
            <person name="Land M."/>
            <person name="Hauser L."/>
            <person name="Kyrpides N."/>
            <person name="Mikhailova N."/>
            <person name="Liu Z."/>
            <person name="Li T."/>
            <person name="Zhao F."/>
            <person name="Overmann J."/>
            <person name="Bryant D.A."/>
            <person name="Richardson P."/>
        </authorList>
    </citation>
    <scope>NUCLEOTIDE SEQUENCE [LARGE SCALE GENOMIC DNA]</scope>
    <source>
        <strain>DSM 5477 / BU-1</strain>
    </source>
</reference>
<name>BSHC_PELPB</name>